<accession>Q09606</accession>
<evidence type="ECO:0000255" key="1"/>
<evidence type="ECO:0000269" key="2">
    <source>
    </source>
</evidence>
<evidence type="ECO:0000305" key="3"/>
<dbReference type="EMBL" id="Z48621">
    <property type="protein sequence ID" value="CAA88547.2"/>
    <property type="molecule type" value="Genomic_DNA"/>
</dbReference>
<dbReference type="PIR" id="T24000">
    <property type="entry name" value="T24000"/>
</dbReference>
<dbReference type="SMR" id="Q09606"/>
<dbReference type="FunCoup" id="Q09606">
    <property type="interactions" value="103"/>
</dbReference>
<dbReference type="STRING" id="6239.R07B1.3.1"/>
<dbReference type="iPTMnet" id="Q09606"/>
<dbReference type="PaxDb" id="6239-R07B1.3"/>
<dbReference type="PeptideAtlas" id="Q09606"/>
<dbReference type="EnsemblMetazoa" id="R07B1.3.1">
    <property type="protein sequence ID" value="R07B1.3.1"/>
    <property type="gene ID" value="WBGene00011076"/>
</dbReference>
<dbReference type="KEGG" id="cel:CELE_R07B1.3"/>
<dbReference type="UCSC" id="R07B1.3">
    <property type="organism name" value="c. elegans"/>
</dbReference>
<dbReference type="AGR" id="WB:WBGene00011076"/>
<dbReference type="CTD" id="181200"/>
<dbReference type="WormBase" id="R07B1.3">
    <property type="protein sequence ID" value="CE47857"/>
    <property type="gene ID" value="WBGene00011076"/>
    <property type="gene designation" value="scav-5"/>
</dbReference>
<dbReference type="eggNOG" id="KOG3776">
    <property type="taxonomic scope" value="Eukaryota"/>
</dbReference>
<dbReference type="GeneTree" id="ENSGT00940000153372"/>
<dbReference type="HOGENOM" id="CLU_019853_3_1_1"/>
<dbReference type="InParanoid" id="Q09606"/>
<dbReference type="OMA" id="DENYWIN"/>
<dbReference type="OrthoDB" id="18585at2759"/>
<dbReference type="PhylomeDB" id="Q09606"/>
<dbReference type="Reactome" id="R-CEL-114608">
    <property type="pathway name" value="Platelet degranulation"/>
</dbReference>
<dbReference type="Reactome" id="R-CEL-1236973">
    <property type="pathway name" value="Cross-presentation of particulate exogenous antigens (phagosomes)"/>
</dbReference>
<dbReference type="Reactome" id="R-CEL-434313">
    <property type="pathway name" value="Intracellular metabolism of fatty acids regulates insulin secretion"/>
</dbReference>
<dbReference type="Reactome" id="R-CEL-6798695">
    <property type="pathway name" value="Neutrophil degranulation"/>
</dbReference>
<dbReference type="PRO" id="PR:Q09606"/>
<dbReference type="Proteomes" id="UP000001940">
    <property type="component" value="Chromosome X"/>
</dbReference>
<dbReference type="Bgee" id="WBGene00011076">
    <property type="expression patterns" value="Expressed in material anatomical entity and 3 other cell types or tissues"/>
</dbReference>
<dbReference type="GO" id="GO:0016020">
    <property type="term" value="C:membrane"/>
    <property type="evidence" value="ECO:0000318"/>
    <property type="project" value="GO_Central"/>
</dbReference>
<dbReference type="GO" id="GO:0005044">
    <property type="term" value="F:scavenger receptor activity"/>
    <property type="evidence" value="ECO:0000318"/>
    <property type="project" value="GO_Central"/>
</dbReference>
<dbReference type="InterPro" id="IPR002159">
    <property type="entry name" value="CD36_fam"/>
</dbReference>
<dbReference type="PANTHER" id="PTHR11923:SF113">
    <property type="entry name" value="PROTEIN CBR-SCAV-5"/>
    <property type="match status" value="1"/>
</dbReference>
<dbReference type="PANTHER" id="PTHR11923">
    <property type="entry name" value="SCAVENGER RECEPTOR CLASS B TYPE-1 SR-B1"/>
    <property type="match status" value="1"/>
</dbReference>
<dbReference type="Pfam" id="PF01130">
    <property type="entry name" value="CD36"/>
    <property type="match status" value="1"/>
</dbReference>
<dbReference type="PRINTS" id="PR01609">
    <property type="entry name" value="CD36FAMILY"/>
</dbReference>
<keyword id="KW-0325">Glycoprotein</keyword>
<keyword id="KW-0472">Membrane</keyword>
<keyword id="KW-1185">Reference proteome</keyword>
<keyword id="KW-0812">Transmembrane</keyword>
<keyword id="KW-1133">Transmembrane helix</keyword>
<organism>
    <name type="scientific">Caenorhabditis elegans</name>
    <dbReference type="NCBI Taxonomy" id="6239"/>
    <lineage>
        <taxon>Eukaryota</taxon>
        <taxon>Metazoa</taxon>
        <taxon>Ecdysozoa</taxon>
        <taxon>Nematoda</taxon>
        <taxon>Chromadorea</taxon>
        <taxon>Rhabditida</taxon>
        <taxon>Rhabditina</taxon>
        <taxon>Rhabditomorpha</taxon>
        <taxon>Rhabditoidea</taxon>
        <taxon>Rhabditidae</taxon>
        <taxon>Peloderinae</taxon>
        <taxon>Caenorhabditis</taxon>
    </lineage>
</organism>
<reference key="1">
    <citation type="journal article" date="1998" name="Science">
        <title>Genome sequence of the nematode C. elegans: a platform for investigating biology.</title>
        <authorList>
            <consortium name="The C. elegans sequencing consortium"/>
        </authorList>
    </citation>
    <scope>NUCLEOTIDE SEQUENCE [LARGE SCALE GENOMIC DNA]</scope>
    <source>
        <strain>Bristol N2</strain>
    </source>
</reference>
<reference key="2">
    <citation type="journal article" date="2005" name="Glycobiology">
        <title>Identification of the hydrophobic glycoproteins of Caenorhabditis elegans.</title>
        <authorList>
            <person name="Fan X."/>
            <person name="She Y.-M."/>
            <person name="Bagshaw R.D."/>
            <person name="Callahan J.W."/>
            <person name="Schachter H."/>
            <person name="Mahuran D.J."/>
        </authorList>
    </citation>
    <scope>GLYCOSYLATION [LARGE SCALE ANALYSIS] AT ASN-73</scope>
    <scope>IDENTIFICATION BY MASS SPECTROMETRY</scope>
</reference>
<gene>
    <name type="ORF">R07B1.3</name>
</gene>
<proteinExistence type="evidence at protein level"/>
<comment type="subcellular location">
    <subcellularLocation>
        <location evidence="3">Membrane</location>
        <topology evidence="3">Multi-pass membrane protein</topology>
    </subcellularLocation>
</comment>
<comment type="similarity">
    <text evidence="3">Belongs to the CD36 family.</text>
</comment>
<sequence>MVSIKRYEIISFVIAAFFFLSGLSMWIAFWPIFNSELRSNYKLGANDDGSLHYAAFLYANPPMKNVMKFNLFNVTNPDEVKYLGAKPELIEVGGYAFLESEQKKYYEFSSDKTKMFYQNYKQYHYSEVDNDAGYNYNDKIMFPNSIAEGAVSTVFGPQSEFSPTAKILVSIGLVMLGEYPFISKTVKDVLMDGYEDPLLSVAHSGIFISLVNFYGYGSQLNYIPEMKTFAYLSGYNNSYDENYWINTGYNDFNKLGFVESWAGLEQLPASFWPTLEARQIKGPDSGSLSKIHLTKTDELPFFLSFMCRSFKRTYWQDGLVDGIKTMAFAVPYEEFDTTLEKNAGFRYKNQENVDYFPDWCDKNTTTSLSQCQKTANGTFLLPPGIFPLVCYPGHNAQPPFTVLVSPPHFLYSPPEVQHHLSGMNPDPEKHKPMVFHQEKTSGTALQVDVRFQVNLPVVNNKGSIMSSQMPNVIIPLFYEDSHALVKDFVMDTVWLGVIIVPRIIEYLKFVLIFISICILTTLLVIRVRVKGTVSVV</sequence>
<name>YRN3_CAEEL</name>
<feature type="chain" id="PRO_0000144166" description="Uncharacterized protein R07B1.3">
    <location>
        <begin position="1"/>
        <end position="536"/>
    </location>
</feature>
<feature type="topological domain" description="Cytoplasmic" evidence="1">
    <location>
        <begin position="1"/>
        <end position="8"/>
    </location>
</feature>
<feature type="transmembrane region" description="Helical" evidence="1">
    <location>
        <begin position="9"/>
        <end position="29"/>
    </location>
</feature>
<feature type="topological domain" description="Extracellular" evidence="1">
    <location>
        <begin position="30"/>
        <end position="502"/>
    </location>
</feature>
<feature type="transmembrane region" description="Helical" evidence="1">
    <location>
        <begin position="503"/>
        <end position="523"/>
    </location>
</feature>
<feature type="topological domain" description="Cytoplasmic" evidence="1">
    <location>
        <begin position="524"/>
        <end position="536"/>
    </location>
</feature>
<feature type="glycosylation site" description="N-linked (GlcNAc...) asparagine" evidence="2">
    <location>
        <position position="73"/>
    </location>
</feature>
<feature type="glycosylation site" description="N-linked (GlcNAc...) asparagine" evidence="1">
    <location>
        <position position="236"/>
    </location>
</feature>
<feature type="glycosylation site" description="N-linked (GlcNAc...) asparagine" evidence="1">
    <location>
        <position position="363"/>
    </location>
</feature>
<feature type="glycosylation site" description="N-linked (GlcNAc...) asparagine" evidence="1">
    <location>
        <position position="376"/>
    </location>
</feature>
<protein>
    <recommendedName>
        <fullName>Uncharacterized protein R07B1.3</fullName>
    </recommendedName>
</protein>